<reference key="1">
    <citation type="journal article" date="2004" name="Nature">
        <title>The DNA sequence and analysis of human chromosome 13.</title>
        <authorList>
            <person name="Dunham A."/>
            <person name="Matthews L.H."/>
            <person name="Burton J."/>
            <person name="Ashurst J.L."/>
            <person name="Howe K.L."/>
            <person name="Ashcroft K.J."/>
            <person name="Beare D.M."/>
            <person name="Burford D.C."/>
            <person name="Hunt S.E."/>
            <person name="Griffiths-Jones S."/>
            <person name="Jones M.C."/>
            <person name="Keenan S.J."/>
            <person name="Oliver K."/>
            <person name="Scott C.E."/>
            <person name="Ainscough R."/>
            <person name="Almeida J.P."/>
            <person name="Ambrose K.D."/>
            <person name="Andrews D.T."/>
            <person name="Ashwell R.I.S."/>
            <person name="Babbage A.K."/>
            <person name="Bagguley C.L."/>
            <person name="Bailey J."/>
            <person name="Bannerjee R."/>
            <person name="Barlow K.F."/>
            <person name="Bates K."/>
            <person name="Beasley H."/>
            <person name="Bird C.P."/>
            <person name="Bray-Allen S."/>
            <person name="Brown A.J."/>
            <person name="Brown J.Y."/>
            <person name="Burrill W."/>
            <person name="Carder C."/>
            <person name="Carter N.P."/>
            <person name="Chapman J.C."/>
            <person name="Clamp M.E."/>
            <person name="Clark S.Y."/>
            <person name="Clarke G."/>
            <person name="Clee C.M."/>
            <person name="Clegg S.C."/>
            <person name="Cobley V."/>
            <person name="Collins J.E."/>
            <person name="Corby N."/>
            <person name="Coville G.J."/>
            <person name="Deloukas P."/>
            <person name="Dhami P."/>
            <person name="Dunham I."/>
            <person name="Dunn M."/>
            <person name="Earthrowl M.E."/>
            <person name="Ellington A.G."/>
            <person name="Faulkner L."/>
            <person name="Frankish A.G."/>
            <person name="Frankland J."/>
            <person name="French L."/>
            <person name="Garner P."/>
            <person name="Garnett J."/>
            <person name="Gilbert J.G.R."/>
            <person name="Gilson C.J."/>
            <person name="Ghori J."/>
            <person name="Grafham D.V."/>
            <person name="Gribble S.M."/>
            <person name="Griffiths C."/>
            <person name="Hall R.E."/>
            <person name="Hammond S."/>
            <person name="Harley J.L."/>
            <person name="Hart E.A."/>
            <person name="Heath P.D."/>
            <person name="Howden P.J."/>
            <person name="Huckle E.J."/>
            <person name="Hunt P.J."/>
            <person name="Hunt A.R."/>
            <person name="Johnson C."/>
            <person name="Johnson D."/>
            <person name="Kay M."/>
            <person name="Kimberley A.M."/>
            <person name="King A."/>
            <person name="Laird G.K."/>
            <person name="Langford C.J."/>
            <person name="Lawlor S."/>
            <person name="Leongamornlert D.A."/>
            <person name="Lloyd D.M."/>
            <person name="Lloyd C."/>
            <person name="Loveland J.E."/>
            <person name="Lovell J."/>
            <person name="Martin S."/>
            <person name="Mashreghi-Mohammadi M."/>
            <person name="McLaren S.J."/>
            <person name="McMurray A."/>
            <person name="Milne S."/>
            <person name="Moore M.J.F."/>
            <person name="Nickerson T."/>
            <person name="Palmer S.A."/>
            <person name="Pearce A.V."/>
            <person name="Peck A.I."/>
            <person name="Pelan S."/>
            <person name="Phillimore B."/>
            <person name="Porter K.M."/>
            <person name="Rice C.M."/>
            <person name="Searle S."/>
            <person name="Sehra H.K."/>
            <person name="Shownkeen R."/>
            <person name="Skuce C.D."/>
            <person name="Smith M."/>
            <person name="Steward C.A."/>
            <person name="Sycamore N."/>
            <person name="Tester J."/>
            <person name="Thomas D.W."/>
            <person name="Tracey A."/>
            <person name="Tromans A."/>
            <person name="Tubby B."/>
            <person name="Wall M."/>
            <person name="Wallis J.M."/>
            <person name="West A.P."/>
            <person name="Whitehead S.L."/>
            <person name="Willey D.L."/>
            <person name="Wilming L."/>
            <person name="Wray P.W."/>
            <person name="Wright M.W."/>
            <person name="Young L."/>
            <person name="Coulson A."/>
            <person name="Durbin R.M."/>
            <person name="Hubbard T."/>
            <person name="Sulston J.E."/>
            <person name="Beck S."/>
            <person name="Bentley D.R."/>
            <person name="Rogers J."/>
            <person name="Ross M.T."/>
        </authorList>
    </citation>
    <scope>NUCLEOTIDE SEQUENCE [LARGE SCALE GENOMIC DNA]</scope>
</reference>
<reference key="2">
    <citation type="submission" date="2005-07" db="EMBL/GenBank/DDBJ databases">
        <authorList>
            <person name="Mural R.J."/>
            <person name="Istrail S."/>
            <person name="Sutton G.G."/>
            <person name="Florea L."/>
            <person name="Halpern A.L."/>
            <person name="Mobarry C.M."/>
            <person name="Lippert R."/>
            <person name="Walenz B."/>
            <person name="Shatkay H."/>
            <person name="Dew I."/>
            <person name="Miller J.R."/>
            <person name="Flanigan M.J."/>
            <person name="Edwards N.J."/>
            <person name="Bolanos R."/>
            <person name="Fasulo D."/>
            <person name="Halldorsson B.V."/>
            <person name="Hannenhalli S."/>
            <person name="Turner R."/>
            <person name="Yooseph S."/>
            <person name="Lu F."/>
            <person name="Nusskern D.R."/>
            <person name="Shue B.C."/>
            <person name="Zheng X.H."/>
            <person name="Zhong F."/>
            <person name="Delcher A.L."/>
            <person name="Huson D.H."/>
            <person name="Kravitz S.A."/>
            <person name="Mouchard L."/>
            <person name="Reinert K."/>
            <person name="Remington K.A."/>
            <person name="Clark A.G."/>
            <person name="Waterman M.S."/>
            <person name="Eichler E.E."/>
            <person name="Adams M.D."/>
            <person name="Hunkapiller M.W."/>
            <person name="Myers E.W."/>
            <person name="Venter J.C."/>
        </authorList>
    </citation>
    <scope>NUCLEOTIDE SEQUENCE [LARGE SCALE GENOMIC DNA]</scope>
</reference>
<reference key="3">
    <citation type="journal article" date="2004" name="Genome Res.">
        <title>The status, quality, and expansion of the NIH full-length cDNA project: the Mammalian Gene Collection (MGC).</title>
        <authorList>
            <consortium name="The MGC Project Team"/>
        </authorList>
    </citation>
    <scope>NUCLEOTIDE SEQUENCE [LARGE SCALE MRNA]</scope>
    <source>
        <tissue>Brain</tissue>
    </source>
</reference>
<protein>
    <recommendedName>
        <fullName>Serine-rich and transmembrane domain-containing protein 1</fullName>
    </recommendedName>
</protein>
<feature type="chain" id="PRO_0000331521" description="Serine-rich and transmembrane domain-containing protein 1">
    <location>
        <begin position="1"/>
        <end position="107"/>
    </location>
</feature>
<feature type="transmembrane region" description="Helical" evidence="1">
    <location>
        <begin position="43"/>
        <end position="63"/>
    </location>
</feature>
<feature type="sequence conflict" description="In Ref. 3; AAH36540." evidence="2" ref="3">
    <original>E</original>
    <variation>G</variation>
    <location>
        <position position="78"/>
    </location>
</feature>
<name>SRTM1_HUMAN</name>
<accession>A2A2V5</accession>
<accession>Q8N469</accession>
<proteinExistence type="evidence at protein level"/>
<evidence type="ECO:0000255" key="1"/>
<evidence type="ECO:0000305" key="2"/>
<dbReference type="EMBL" id="AL136160">
    <property type="status" value="NOT_ANNOTATED_CDS"/>
    <property type="molecule type" value="Genomic_DNA"/>
</dbReference>
<dbReference type="EMBL" id="CH471075">
    <property type="protein sequence ID" value="EAX08568.1"/>
    <property type="molecule type" value="Genomic_DNA"/>
</dbReference>
<dbReference type="EMBL" id="BC036540">
    <property type="protein sequence ID" value="AAH36540.1"/>
    <property type="molecule type" value="mRNA"/>
</dbReference>
<dbReference type="CCDS" id="CCDS9358.1"/>
<dbReference type="RefSeq" id="NP_982276.2">
    <property type="nucleotide sequence ID" value="NM_203451.3"/>
</dbReference>
<dbReference type="SMR" id="A2A2V5"/>
<dbReference type="BioGRID" id="134522">
    <property type="interactions" value="14"/>
</dbReference>
<dbReference type="FunCoup" id="A2A2V5">
    <property type="interactions" value="380"/>
</dbReference>
<dbReference type="IntAct" id="A2A2V5">
    <property type="interactions" value="13"/>
</dbReference>
<dbReference type="STRING" id="9606.ENSP00000325776"/>
<dbReference type="PhosphoSitePlus" id="A2A2V5"/>
<dbReference type="BioMuta" id="SERTM1"/>
<dbReference type="PaxDb" id="9606-ENSP00000325776"/>
<dbReference type="PeptideAtlas" id="A2A2V5"/>
<dbReference type="Antibodypedia" id="57544">
    <property type="antibodies" value="9 antibodies from 5 providers"/>
</dbReference>
<dbReference type="DNASU" id="400120"/>
<dbReference type="Ensembl" id="ENST00000315190.4">
    <property type="protein sequence ID" value="ENSP00000325776.3"/>
    <property type="gene ID" value="ENSG00000180440.4"/>
</dbReference>
<dbReference type="GeneID" id="400120"/>
<dbReference type="KEGG" id="hsa:400120"/>
<dbReference type="MANE-Select" id="ENST00000315190.4">
    <property type="protein sequence ID" value="ENSP00000325776.3"/>
    <property type="RefSeq nucleotide sequence ID" value="NM_203451.3"/>
    <property type="RefSeq protein sequence ID" value="NP_982276.2"/>
</dbReference>
<dbReference type="UCSC" id="uc001uvt.5">
    <property type="organism name" value="human"/>
</dbReference>
<dbReference type="AGR" id="HGNC:33792"/>
<dbReference type="CTD" id="400120"/>
<dbReference type="GeneCards" id="SERTM1"/>
<dbReference type="HGNC" id="HGNC:33792">
    <property type="gene designation" value="SERTM1"/>
</dbReference>
<dbReference type="HPA" id="ENSG00000180440">
    <property type="expression patterns" value="Tissue enhanced (brain, endometrium, fallopian tube)"/>
</dbReference>
<dbReference type="neXtProt" id="NX_A2A2V5"/>
<dbReference type="OpenTargets" id="ENSG00000180440"/>
<dbReference type="PharmGKB" id="PA162378085"/>
<dbReference type="VEuPathDB" id="HostDB:ENSG00000180440"/>
<dbReference type="eggNOG" id="ENOG502S4A5">
    <property type="taxonomic scope" value="Eukaryota"/>
</dbReference>
<dbReference type="GeneTree" id="ENSGT00390000016881"/>
<dbReference type="HOGENOM" id="CLU_2196038_0_0_1"/>
<dbReference type="InParanoid" id="A2A2V5"/>
<dbReference type="OMA" id="VYVWIFL"/>
<dbReference type="OrthoDB" id="8445958at2759"/>
<dbReference type="PAN-GO" id="A2A2V5">
    <property type="GO annotations" value="1 GO annotation based on evolutionary models"/>
</dbReference>
<dbReference type="PhylomeDB" id="A2A2V5"/>
<dbReference type="TreeFam" id="TF338260"/>
<dbReference type="PathwayCommons" id="A2A2V5"/>
<dbReference type="SignaLink" id="A2A2V5"/>
<dbReference type="BioGRID-ORCS" id="400120">
    <property type="hits" value="15 hits in 1136 CRISPR screens"/>
</dbReference>
<dbReference type="ChiTaRS" id="SERTM1">
    <property type="organism name" value="human"/>
</dbReference>
<dbReference type="GenomeRNAi" id="400120"/>
<dbReference type="Pharos" id="A2A2V5">
    <property type="development level" value="Tdark"/>
</dbReference>
<dbReference type="PRO" id="PR:A2A2V5"/>
<dbReference type="Proteomes" id="UP000005640">
    <property type="component" value="Chromosome 13"/>
</dbReference>
<dbReference type="RNAct" id="A2A2V5">
    <property type="molecule type" value="protein"/>
</dbReference>
<dbReference type="Bgee" id="ENSG00000180440">
    <property type="expression patterns" value="Expressed in germinal epithelium of ovary and 114 other cell types or tissues"/>
</dbReference>
<dbReference type="GO" id="GO:0043231">
    <property type="term" value="C:intracellular membrane-bounded organelle"/>
    <property type="evidence" value="ECO:0000314"/>
    <property type="project" value="HPA"/>
</dbReference>
<dbReference type="GO" id="GO:0016020">
    <property type="term" value="C:membrane"/>
    <property type="evidence" value="ECO:0007669"/>
    <property type="project" value="UniProtKB-SubCell"/>
</dbReference>
<dbReference type="InterPro" id="IPR031741">
    <property type="entry name" value="SERTM"/>
</dbReference>
<dbReference type="PANTHER" id="PTHR35660">
    <property type="entry name" value="SERINE-RICH AND TRANSMEMBRANE DOMAIN-CONTAINING PROTEIN 1"/>
    <property type="match status" value="1"/>
</dbReference>
<dbReference type="PANTHER" id="PTHR35660:SF1">
    <property type="entry name" value="SERINE-RICH AND TRANSMEMBRANE DOMAIN-CONTAINING PROTEIN 1"/>
    <property type="match status" value="1"/>
</dbReference>
<dbReference type="Pfam" id="PF15872">
    <property type="entry name" value="SRTM1"/>
    <property type="match status" value="1"/>
</dbReference>
<keyword id="KW-0472">Membrane</keyword>
<keyword id="KW-1185">Reference proteome</keyword>
<keyword id="KW-0812">Transmembrane</keyword>
<keyword id="KW-1133">Transmembrane helix</keyword>
<sequence>MSEPDTSSGFSGSVENGTFLELFPTSLSTSVDPSSGHLSNVYIYVSIFLSLLAFLLLLLIIALQRLKNIISSSSSYPEYPSDAGSSFTNLEVCSISSQRSTFSNLSS</sequence>
<comment type="interaction">
    <interactant intactId="EBI-17284533">
        <id>A2A2V5</id>
    </interactant>
    <interactant intactId="EBI-6657396">
        <id>P19397</id>
        <label>CD53</label>
    </interactant>
    <organismsDiffer>false</organismsDiffer>
    <experiments>3</experiments>
</comment>
<comment type="interaction">
    <interactant intactId="EBI-17284533">
        <id>A2A2V5</id>
    </interactant>
    <interactant intactId="EBI-740744">
        <id>O95471</id>
        <label>CLDN7</label>
    </interactant>
    <organismsDiffer>false</organismsDiffer>
    <experiments>3</experiments>
</comment>
<comment type="interaction">
    <interactant intactId="EBI-17284533">
        <id>A2A2V5</id>
    </interactant>
    <interactant intactId="EBI-4319440">
        <id>P54849</id>
        <label>EMP1</label>
    </interactant>
    <organismsDiffer>false</organismsDiffer>
    <experiments>3</experiments>
</comment>
<comment type="interaction">
    <interactant intactId="EBI-17284533">
        <id>A2A2V5</id>
    </interactant>
    <interactant intactId="EBI-17565645">
        <id>P08034</id>
        <label>GJB1</label>
    </interactant>
    <organismsDiffer>false</organismsDiffer>
    <experiments>3</experiments>
</comment>
<comment type="interaction">
    <interactant intactId="EBI-17284533">
        <id>A2A2V5</id>
    </interactant>
    <interactant intactId="EBI-18076404">
        <id>O15529</id>
        <label>GPR42</label>
    </interactant>
    <organismsDiffer>false</organismsDiffer>
    <experiments>3</experiments>
</comment>
<comment type="interaction">
    <interactant intactId="EBI-17284533">
        <id>A2A2V5</id>
    </interactant>
    <interactant intactId="EBI-11721746">
        <id>Q8TED1</id>
        <label>GPX8</label>
    </interactant>
    <organismsDiffer>false</organismsDiffer>
    <experiments>3</experiments>
</comment>
<comment type="interaction">
    <interactant intactId="EBI-17284533">
        <id>A2A2V5</id>
    </interactant>
    <interactant intactId="EBI-12017638">
        <id>P48051</id>
        <label>KCNJ6</label>
    </interactant>
    <organismsDiffer>false</organismsDiffer>
    <experiments>3</experiments>
</comment>
<comment type="interaction">
    <interactant intactId="EBI-17284533">
        <id>A2A2V5</id>
    </interactant>
    <interactant intactId="EBI-2820517">
        <id>Q8TAF8</id>
        <label>LHFPL5</label>
    </interactant>
    <organismsDiffer>false</organismsDiffer>
    <experiments>3</experiments>
</comment>
<comment type="interaction">
    <interactant intactId="EBI-17284533">
        <id>A2A2V5</id>
    </interactant>
    <interactant intactId="EBI-3925442">
        <id>Q9HCJ2</id>
        <label>LRRC4C</label>
    </interactant>
    <organismsDiffer>false</organismsDiffer>
    <experiments>3</experiments>
</comment>
<comment type="interaction">
    <interactant intactId="EBI-17284533">
        <id>A2A2V5</id>
    </interactant>
    <interactant intactId="EBI-12820341">
        <id>Q96JQ5</id>
        <label>MS4A4A</label>
    </interactant>
    <organismsDiffer>false</organismsDiffer>
    <experiments>3</experiments>
</comment>
<comment type="interaction">
    <interactant intactId="EBI-17284533">
        <id>A2A2V5</id>
    </interactant>
    <interactant intactId="EBI-3923617">
        <id>Q9H2K0</id>
        <label>MTIF3</label>
    </interactant>
    <organismsDiffer>false</organismsDiffer>
    <experiments>3</experiments>
</comment>
<comment type="interaction">
    <interactant intactId="EBI-17284533">
        <id>A2A2V5</id>
    </interactant>
    <interactant intactId="EBI-17498703">
        <id>Q9HBV2</id>
        <label>SPACA1</label>
    </interactant>
    <organismsDiffer>false</organismsDiffer>
    <experiments>3</experiments>
</comment>
<comment type="interaction">
    <interactant intactId="EBI-17284533">
        <id>A2A2V5</id>
    </interactant>
    <interactant intactId="EBI-741829">
        <id>Q96HH6</id>
        <label>TMEM19</label>
    </interactant>
    <organismsDiffer>false</organismsDiffer>
    <experiments>3</experiments>
</comment>
<comment type="subcellular location">
    <subcellularLocation>
        <location evidence="2">Membrane</location>
        <topology evidence="2">Single-pass membrane protein</topology>
    </subcellularLocation>
</comment>
<gene>
    <name type="primary">SERTM1</name>
    <name type="synonym">C13orf36</name>
</gene>
<organism>
    <name type="scientific">Homo sapiens</name>
    <name type="common">Human</name>
    <dbReference type="NCBI Taxonomy" id="9606"/>
    <lineage>
        <taxon>Eukaryota</taxon>
        <taxon>Metazoa</taxon>
        <taxon>Chordata</taxon>
        <taxon>Craniata</taxon>
        <taxon>Vertebrata</taxon>
        <taxon>Euteleostomi</taxon>
        <taxon>Mammalia</taxon>
        <taxon>Eutheria</taxon>
        <taxon>Euarchontoglires</taxon>
        <taxon>Primates</taxon>
        <taxon>Haplorrhini</taxon>
        <taxon>Catarrhini</taxon>
        <taxon>Hominidae</taxon>
        <taxon>Homo</taxon>
    </lineage>
</organism>